<comment type="similarity">
    <text evidence="1">Belongs to the universal ribosomal protein uL16 family.</text>
</comment>
<reference key="1">
    <citation type="journal article" date="2009" name="Proc. Natl. Acad. Sci. U.S.A.">
        <title>Biogeography of the Sulfolobus islandicus pan-genome.</title>
        <authorList>
            <person name="Reno M.L."/>
            <person name="Held N.L."/>
            <person name="Fields C.J."/>
            <person name="Burke P.V."/>
            <person name="Whitaker R.J."/>
        </authorList>
    </citation>
    <scope>NUCLEOTIDE SEQUENCE [LARGE SCALE GENOMIC DNA]</scope>
    <source>
        <strain>L.S.2.15 / Lassen #1</strain>
    </source>
</reference>
<organism>
    <name type="scientific">Saccharolobus islandicus (strain L.S.2.15 / Lassen #1)</name>
    <name type="common">Sulfolobus islandicus</name>
    <dbReference type="NCBI Taxonomy" id="429572"/>
    <lineage>
        <taxon>Archaea</taxon>
        <taxon>Thermoproteota</taxon>
        <taxon>Thermoprotei</taxon>
        <taxon>Sulfolobales</taxon>
        <taxon>Sulfolobaceae</taxon>
        <taxon>Saccharolobus</taxon>
    </lineage>
</organism>
<accession>C3MRC8</accession>
<gene>
    <name evidence="1" type="primary">rpl10e</name>
    <name type="ordered locus">LS215_1946</name>
</gene>
<evidence type="ECO:0000255" key="1">
    <source>
        <dbReference type="HAMAP-Rule" id="MF_00448"/>
    </source>
</evidence>
<evidence type="ECO:0000305" key="2"/>
<dbReference type="EMBL" id="CP001399">
    <property type="protein sequence ID" value="ACP35941.1"/>
    <property type="molecule type" value="Genomic_DNA"/>
</dbReference>
<dbReference type="RefSeq" id="WP_012711781.1">
    <property type="nucleotide sequence ID" value="NC_012589.1"/>
</dbReference>
<dbReference type="SMR" id="C3MRC8"/>
<dbReference type="KEGG" id="sis:LS215_1946"/>
<dbReference type="HOGENOM" id="CLU_084051_0_2_2"/>
<dbReference type="OrthoDB" id="30538at2157"/>
<dbReference type="Proteomes" id="UP000001747">
    <property type="component" value="Chromosome"/>
</dbReference>
<dbReference type="GO" id="GO:1990904">
    <property type="term" value="C:ribonucleoprotein complex"/>
    <property type="evidence" value="ECO:0007669"/>
    <property type="project" value="UniProtKB-KW"/>
</dbReference>
<dbReference type="GO" id="GO:0005840">
    <property type="term" value="C:ribosome"/>
    <property type="evidence" value="ECO:0007669"/>
    <property type="project" value="UniProtKB-KW"/>
</dbReference>
<dbReference type="GO" id="GO:0003735">
    <property type="term" value="F:structural constituent of ribosome"/>
    <property type="evidence" value="ECO:0007669"/>
    <property type="project" value="InterPro"/>
</dbReference>
<dbReference type="GO" id="GO:0006412">
    <property type="term" value="P:translation"/>
    <property type="evidence" value="ECO:0007669"/>
    <property type="project" value="UniProtKB-UniRule"/>
</dbReference>
<dbReference type="CDD" id="cd01433">
    <property type="entry name" value="Ribosomal_L16_L10e"/>
    <property type="match status" value="1"/>
</dbReference>
<dbReference type="FunFam" id="3.90.1170.10:FF:000008">
    <property type="entry name" value="50S ribosomal protein L10e"/>
    <property type="match status" value="1"/>
</dbReference>
<dbReference type="Gene3D" id="3.90.1170.10">
    <property type="entry name" value="Ribosomal protein L10e/L16"/>
    <property type="match status" value="1"/>
</dbReference>
<dbReference type="HAMAP" id="MF_00448">
    <property type="entry name" value="Ribosomal_uL16_arch"/>
    <property type="match status" value="1"/>
</dbReference>
<dbReference type="InterPro" id="IPR047873">
    <property type="entry name" value="Ribosomal_uL16"/>
</dbReference>
<dbReference type="InterPro" id="IPR022981">
    <property type="entry name" value="Ribosomal_uL16_arc"/>
</dbReference>
<dbReference type="InterPro" id="IPR018255">
    <property type="entry name" value="Ribosomal_uL16_CS_euk_arc"/>
</dbReference>
<dbReference type="InterPro" id="IPR016180">
    <property type="entry name" value="Ribosomal_uL16_dom"/>
</dbReference>
<dbReference type="InterPro" id="IPR001197">
    <property type="entry name" value="Ribosomal_uL16_euk_arch"/>
</dbReference>
<dbReference type="InterPro" id="IPR036920">
    <property type="entry name" value="Ribosomal_uL16_sf"/>
</dbReference>
<dbReference type="NCBIfam" id="NF003236">
    <property type="entry name" value="PRK04199.1-1"/>
    <property type="match status" value="1"/>
</dbReference>
<dbReference type="NCBIfam" id="NF003239">
    <property type="entry name" value="PRK04199.1-4"/>
    <property type="match status" value="1"/>
</dbReference>
<dbReference type="PANTHER" id="PTHR11726">
    <property type="entry name" value="60S RIBOSOMAL PROTEIN L10"/>
    <property type="match status" value="1"/>
</dbReference>
<dbReference type="Pfam" id="PF00252">
    <property type="entry name" value="Ribosomal_L16"/>
    <property type="match status" value="1"/>
</dbReference>
<dbReference type="PIRSF" id="PIRSF005590">
    <property type="entry name" value="Ribosomal_L10"/>
    <property type="match status" value="1"/>
</dbReference>
<dbReference type="SUPFAM" id="SSF54686">
    <property type="entry name" value="Ribosomal protein L16p/L10e"/>
    <property type="match status" value="1"/>
</dbReference>
<dbReference type="PROSITE" id="PS01257">
    <property type="entry name" value="RIBOSOMAL_L10E"/>
    <property type="match status" value="1"/>
</dbReference>
<feature type="chain" id="PRO_1000206200" description="Large ribosomal subunit protein uL16">
    <location>
        <begin position="1"/>
        <end position="178"/>
    </location>
</feature>
<sequence>MPLRPGRCYRHFSGPAYTRKEYIPGIPQPKITKFTSGNPNGDYDYEVRLITTEIGQIRHNALEAVRTITLKTLTKRTGSETSFFMWILKYPHHVLRENKMMAFAGADRLQDGMRLSFGTPIGTAARIEKLGEILIVVKVKKEHLDFAKEALKIASKKLPLRTRIEIIPLRPIRQEVQS</sequence>
<proteinExistence type="inferred from homology"/>
<name>RL10E_SACI2</name>
<protein>
    <recommendedName>
        <fullName evidence="1">Large ribosomal subunit protein uL16</fullName>
    </recommendedName>
    <alternativeName>
        <fullName evidence="2">50S ribosomal protein L10e</fullName>
    </alternativeName>
</protein>
<keyword id="KW-0687">Ribonucleoprotein</keyword>
<keyword id="KW-0689">Ribosomal protein</keyword>